<reference key="1">
    <citation type="journal article" date="2005" name="J. Bacteriol.">
        <title>Insights on evolution of virulence and resistance from the complete genome analysis of an early methicillin-resistant Staphylococcus aureus strain and a biofilm-producing methicillin-resistant Staphylococcus epidermidis strain.</title>
        <authorList>
            <person name="Gill S.R."/>
            <person name="Fouts D.E."/>
            <person name="Archer G.L."/>
            <person name="Mongodin E.F."/>
            <person name="DeBoy R.T."/>
            <person name="Ravel J."/>
            <person name="Paulsen I.T."/>
            <person name="Kolonay J.F."/>
            <person name="Brinkac L.M."/>
            <person name="Beanan M.J."/>
            <person name="Dodson R.J."/>
            <person name="Daugherty S.C."/>
            <person name="Madupu R."/>
            <person name="Angiuoli S.V."/>
            <person name="Durkin A.S."/>
            <person name="Haft D.H."/>
            <person name="Vamathevan J.J."/>
            <person name="Khouri H."/>
            <person name="Utterback T.R."/>
            <person name="Lee C."/>
            <person name="Dimitrov G."/>
            <person name="Jiang L."/>
            <person name="Qin H."/>
            <person name="Weidman J."/>
            <person name="Tran K."/>
            <person name="Kang K.H."/>
            <person name="Hance I.R."/>
            <person name="Nelson K.E."/>
            <person name="Fraser C.M."/>
        </authorList>
    </citation>
    <scope>NUCLEOTIDE SEQUENCE [LARGE SCALE GENOMIC DNA]</scope>
    <source>
        <strain>COL</strain>
    </source>
</reference>
<keyword id="KW-0560">Oxidoreductase</keyword>
<sequence length="448" mass="49715">MSHRYIPLTEKDKQEMLQTIGAKSIGELFGDVPSDILLNRDLNIAEGEAETTLLRRLNRIASKNITKETHTSFLGAGVYDHYAPSVVDAMISRSEFYTAYTPYQPEISQGELQAIFEFQTLICELTDMDVANSSMYDGMTSFAEACILAFSQTKKNKIVVSKGLHYQALQVLHTYAKTRKEFEVVEIDLDGTVTDLKKLEAAVDDETAAVAVQYPNFYGSIEDLKKIHSFIEDKKALFIVYANPLALGLLTPPGSFGADIVVGDTQPFGIPAQFGGPHCGYFATTKKLMRKVPGRLVGQTQDDEGNRGFVLTLQAREQHIRRDKATSNICSNQALNALASSIAMSALGKQGIYDIAVQNIEHANYAKQQFIKKGFEVLDGTSFNEFVVKFDKPIQQVNEELVKYNIIGGFDLGVVSDDFKNHMLIAVTELRTKDEIDTFVEKAGELND</sequence>
<protein>
    <recommendedName>
        <fullName evidence="1">Probable glycine dehydrogenase (decarboxylating) subunit 1</fullName>
        <ecNumber evidence="1">1.4.4.2</ecNumber>
    </recommendedName>
    <alternativeName>
        <fullName evidence="1">Glycine cleavage system P-protein subunit 1</fullName>
    </alternativeName>
    <alternativeName>
        <fullName evidence="1">Glycine decarboxylase subunit 1</fullName>
    </alternativeName>
    <alternativeName>
        <fullName evidence="1">Glycine dehydrogenase (aminomethyl-transferring) subunit 1</fullName>
    </alternativeName>
</protein>
<feature type="chain" id="PRO_0000166970" description="Probable glycine dehydrogenase (decarboxylating) subunit 1">
    <location>
        <begin position="1"/>
        <end position="448"/>
    </location>
</feature>
<organism>
    <name type="scientific">Staphylococcus aureus (strain COL)</name>
    <dbReference type="NCBI Taxonomy" id="93062"/>
    <lineage>
        <taxon>Bacteria</taxon>
        <taxon>Bacillati</taxon>
        <taxon>Bacillota</taxon>
        <taxon>Bacilli</taxon>
        <taxon>Bacillales</taxon>
        <taxon>Staphylococcaceae</taxon>
        <taxon>Staphylococcus</taxon>
    </lineage>
</organism>
<evidence type="ECO:0000255" key="1">
    <source>
        <dbReference type="HAMAP-Rule" id="MF_00712"/>
    </source>
</evidence>
<dbReference type="EC" id="1.4.4.2" evidence="1"/>
<dbReference type="EMBL" id="CP000046">
    <property type="protein sequence ID" value="AAW38210.1"/>
    <property type="molecule type" value="Genomic_DNA"/>
</dbReference>
<dbReference type="RefSeq" id="WP_000019693.1">
    <property type="nucleotide sequence ID" value="NC_002951.2"/>
</dbReference>
<dbReference type="SMR" id="Q5HFM3"/>
<dbReference type="KEGG" id="sac:SACOL1594"/>
<dbReference type="HOGENOM" id="CLU_004620_0_2_9"/>
<dbReference type="Proteomes" id="UP000000530">
    <property type="component" value="Chromosome"/>
</dbReference>
<dbReference type="GO" id="GO:0004375">
    <property type="term" value="F:glycine dehydrogenase (decarboxylating) activity"/>
    <property type="evidence" value="ECO:0007669"/>
    <property type="project" value="UniProtKB-EC"/>
</dbReference>
<dbReference type="GO" id="GO:0019464">
    <property type="term" value="P:glycine decarboxylation via glycine cleavage system"/>
    <property type="evidence" value="ECO:0007669"/>
    <property type="project" value="UniProtKB-UniRule"/>
</dbReference>
<dbReference type="GO" id="GO:0009116">
    <property type="term" value="P:nucleoside metabolic process"/>
    <property type="evidence" value="ECO:0007669"/>
    <property type="project" value="InterPro"/>
</dbReference>
<dbReference type="CDD" id="cd00613">
    <property type="entry name" value="GDC-P"/>
    <property type="match status" value="1"/>
</dbReference>
<dbReference type="Gene3D" id="3.90.1150.10">
    <property type="entry name" value="Aspartate Aminotransferase, domain 1"/>
    <property type="match status" value="1"/>
</dbReference>
<dbReference type="Gene3D" id="3.40.640.10">
    <property type="entry name" value="Type I PLP-dependent aspartate aminotransferase-like (Major domain)"/>
    <property type="match status" value="1"/>
</dbReference>
<dbReference type="HAMAP" id="MF_00712">
    <property type="entry name" value="GcvPA"/>
    <property type="match status" value="1"/>
</dbReference>
<dbReference type="InterPro" id="IPR023010">
    <property type="entry name" value="GcvPA"/>
</dbReference>
<dbReference type="InterPro" id="IPR049315">
    <property type="entry name" value="GDC-P_N"/>
</dbReference>
<dbReference type="InterPro" id="IPR020581">
    <property type="entry name" value="GDC_P"/>
</dbReference>
<dbReference type="InterPro" id="IPR015424">
    <property type="entry name" value="PyrdxlP-dep_Trfase"/>
</dbReference>
<dbReference type="InterPro" id="IPR015421">
    <property type="entry name" value="PyrdxlP-dep_Trfase_major"/>
</dbReference>
<dbReference type="InterPro" id="IPR015422">
    <property type="entry name" value="PyrdxlP-dep_Trfase_small"/>
</dbReference>
<dbReference type="NCBIfam" id="NF001696">
    <property type="entry name" value="PRK00451.1"/>
    <property type="match status" value="1"/>
</dbReference>
<dbReference type="PANTHER" id="PTHR42806">
    <property type="entry name" value="GLYCINE CLEAVAGE SYSTEM P-PROTEIN"/>
    <property type="match status" value="1"/>
</dbReference>
<dbReference type="PANTHER" id="PTHR42806:SF1">
    <property type="entry name" value="GLYCINE DEHYDROGENASE (DECARBOXYLATING)"/>
    <property type="match status" value="1"/>
</dbReference>
<dbReference type="Pfam" id="PF02347">
    <property type="entry name" value="GDC-P"/>
    <property type="match status" value="1"/>
</dbReference>
<dbReference type="PIRSF" id="PIRSF006815">
    <property type="entry name" value="GcvPA"/>
    <property type="match status" value="1"/>
</dbReference>
<dbReference type="SUPFAM" id="SSF53383">
    <property type="entry name" value="PLP-dependent transferases"/>
    <property type="match status" value="1"/>
</dbReference>
<comment type="function">
    <text evidence="1">The glycine cleavage system catalyzes the degradation of glycine. The P protein binds the alpha-amino group of glycine through its pyridoxal phosphate cofactor; CO(2) is released and the remaining methylamine moiety is then transferred to the lipoamide cofactor of the H protein.</text>
</comment>
<comment type="catalytic activity">
    <reaction evidence="1">
        <text>N(6)-[(R)-lipoyl]-L-lysyl-[glycine-cleavage complex H protein] + glycine + H(+) = N(6)-[(R)-S(8)-aminomethyldihydrolipoyl]-L-lysyl-[glycine-cleavage complex H protein] + CO2</text>
        <dbReference type="Rhea" id="RHEA:24304"/>
        <dbReference type="Rhea" id="RHEA-COMP:10494"/>
        <dbReference type="Rhea" id="RHEA-COMP:10495"/>
        <dbReference type="ChEBI" id="CHEBI:15378"/>
        <dbReference type="ChEBI" id="CHEBI:16526"/>
        <dbReference type="ChEBI" id="CHEBI:57305"/>
        <dbReference type="ChEBI" id="CHEBI:83099"/>
        <dbReference type="ChEBI" id="CHEBI:83143"/>
        <dbReference type="EC" id="1.4.4.2"/>
    </reaction>
</comment>
<comment type="subunit">
    <text evidence="1">The glycine cleavage system is composed of four proteins: P, T, L and H. In this organism, the P 'protein' is a heterodimer of two subunits.</text>
</comment>
<comment type="similarity">
    <text evidence="1">Belongs to the GcvP family. N-terminal subunit subfamily.</text>
</comment>
<name>GCSPA_STAAC</name>
<proteinExistence type="inferred from homology"/>
<accession>Q5HFM3</accession>
<gene>
    <name evidence="1" type="primary">gcvPA</name>
    <name type="ordered locus">SACOL1594</name>
</gene>